<proteinExistence type="inferred from homology"/>
<accession>B4RWX9</accession>
<accession>F2GD17</accession>
<dbReference type="EC" id="2.4.1.227" evidence="1"/>
<dbReference type="EMBL" id="CP001103">
    <property type="protein sequence ID" value="AEA99164.1"/>
    <property type="molecule type" value="Genomic_DNA"/>
</dbReference>
<dbReference type="RefSeq" id="WP_012519456.1">
    <property type="nucleotide sequence ID" value="NC_011138.3"/>
</dbReference>
<dbReference type="SMR" id="B4RWX9"/>
<dbReference type="CAZy" id="GT28">
    <property type="family name" value="Glycosyltransferase Family 28"/>
</dbReference>
<dbReference type="KEGG" id="amc:MADE_1015150"/>
<dbReference type="HOGENOM" id="CLU_037404_2_0_6"/>
<dbReference type="UniPathway" id="UPA00219"/>
<dbReference type="Proteomes" id="UP000001870">
    <property type="component" value="Chromosome"/>
</dbReference>
<dbReference type="GO" id="GO:0005886">
    <property type="term" value="C:plasma membrane"/>
    <property type="evidence" value="ECO:0007669"/>
    <property type="project" value="UniProtKB-SubCell"/>
</dbReference>
<dbReference type="GO" id="GO:0051991">
    <property type="term" value="F:UDP-N-acetyl-D-glucosamine:N-acetylmuramoyl-L-alanyl-D-glutamyl-meso-2,6-diaminopimelyl-D-alanyl-D-alanine-diphosphoundecaprenol 4-beta-N-acetylglucosaminlytransferase activity"/>
    <property type="evidence" value="ECO:0007669"/>
    <property type="project" value="RHEA"/>
</dbReference>
<dbReference type="GO" id="GO:0050511">
    <property type="term" value="F:undecaprenyldiphospho-muramoylpentapeptide beta-N-acetylglucosaminyltransferase activity"/>
    <property type="evidence" value="ECO:0007669"/>
    <property type="project" value="UniProtKB-UniRule"/>
</dbReference>
<dbReference type="GO" id="GO:0005975">
    <property type="term" value="P:carbohydrate metabolic process"/>
    <property type="evidence" value="ECO:0007669"/>
    <property type="project" value="InterPro"/>
</dbReference>
<dbReference type="GO" id="GO:0051301">
    <property type="term" value="P:cell division"/>
    <property type="evidence" value="ECO:0007669"/>
    <property type="project" value="UniProtKB-KW"/>
</dbReference>
<dbReference type="GO" id="GO:0071555">
    <property type="term" value="P:cell wall organization"/>
    <property type="evidence" value="ECO:0007669"/>
    <property type="project" value="UniProtKB-KW"/>
</dbReference>
<dbReference type="GO" id="GO:0030259">
    <property type="term" value="P:lipid glycosylation"/>
    <property type="evidence" value="ECO:0007669"/>
    <property type="project" value="UniProtKB-UniRule"/>
</dbReference>
<dbReference type="GO" id="GO:0009252">
    <property type="term" value="P:peptidoglycan biosynthetic process"/>
    <property type="evidence" value="ECO:0007669"/>
    <property type="project" value="UniProtKB-UniRule"/>
</dbReference>
<dbReference type="GO" id="GO:0008360">
    <property type="term" value="P:regulation of cell shape"/>
    <property type="evidence" value="ECO:0007669"/>
    <property type="project" value="UniProtKB-KW"/>
</dbReference>
<dbReference type="CDD" id="cd03785">
    <property type="entry name" value="GT28_MurG"/>
    <property type="match status" value="1"/>
</dbReference>
<dbReference type="Gene3D" id="3.40.50.2000">
    <property type="entry name" value="Glycogen Phosphorylase B"/>
    <property type="match status" value="2"/>
</dbReference>
<dbReference type="HAMAP" id="MF_00033">
    <property type="entry name" value="MurG"/>
    <property type="match status" value="1"/>
</dbReference>
<dbReference type="InterPro" id="IPR006009">
    <property type="entry name" value="GlcNAc_MurG"/>
</dbReference>
<dbReference type="InterPro" id="IPR007235">
    <property type="entry name" value="Glyco_trans_28_C"/>
</dbReference>
<dbReference type="InterPro" id="IPR004276">
    <property type="entry name" value="GlycoTrans_28_N"/>
</dbReference>
<dbReference type="NCBIfam" id="TIGR01133">
    <property type="entry name" value="murG"/>
    <property type="match status" value="1"/>
</dbReference>
<dbReference type="PANTHER" id="PTHR21015:SF22">
    <property type="entry name" value="GLYCOSYLTRANSFERASE"/>
    <property type="match status" value="1"/>
</dbReference>
<dbReference type="PANTHER" id="PTHR21015">
    <property type="entry name" value="UDP-N-ACETYLGLUCOSAMINE--N-ACETYLMURAMYL-(PENTAPEPTIDE) PYROPHOSPHORYL-UNDECAPRENOL N-ACETYLGLUCOSAMINE TRANSFERASE 1"/>
    <property type="match status" value="1"/>
</dbReference>
<dbReference type="Pfam" id="PF04101">
    <property type="entry name" value="Glyco_tran_28_C"/>
    <property type="match status" value="1"/>
</dbReference>
<dbReference type="Pfam" id="PF03033">
    <property type="entry name" value="Glyco_transf_28"/>
    <property type="match status" value="1"/>
</dbReference>
<dbReference type="SUPFAM" id="SSF53756">
    <property type="entry name" value="UDP-Glycosyltransferase/glycogen phosphorylase"/>
    <property type="match status" value="1"/>
</dbReference>
<sequence length="364" mass="38367">MAKRCLIMAGGTGGHVFPGLAVANALRAEGWDIHWLGTAERMEAQVVPKHDIPIHFIPVKGLRGKGISARIQGAVALVKSLFSARRIIKRLQPDIVVGFGGYASGPGGVAAKSLGIPVIVHEQNAAAGMTNKLLSKLASRVLLGFDDAKEQFSGAADNVHTVGNPVRDDIWQVKPKKRESYAGATSLNMLVVGGSLGAQILNETVPETCGVLNGLSIKHQCGKGNSDGVVKAYESVGADMANVELSDFIDNMAAAYEWADFIVCRAGALTVSEVAASGRAAIFVPLPFAVDDHQTKNAQSLVKQNAALMIAQSVLKQNLGQAVRRWLEHPEDCLKMGALAKTCASIHATENVVSHVKSVVGEGD</sequence>
<name>MURG_ALTMD</name>
<reference key="1">
    <citation type="journal article" date="2008" name="ISME J.">
        <title>Comparative genomics of two ecotypes of the marine planktonic copiotroph Alteromonas macleodii suggests alternative lifestyles associated with different kinds of particulate organic matter.</title>
        <authorList>
            <person name="Ivars-Martinez E."/>
            <person name="Martin-Cuadrado A.-B."/>
            <person name="D'Auria G."/>
            <person name="Mira A."/>
            <person name="Ferriera S."/>
            <person name="Johnson J."/>
            <person name="Friedman R."/>
            <person name="Rodriguez-Valera F."/>
        </authorList>
    </citation>
    <scope>NUCLEOTIDE SEQUENCE [LARGE SCALE GENOMIC DNA]</scope>
    <source>
        <strain>DSM 17117 / CIP 110805 / LMG 28347 / Deep ecotype</strain>
    </source>
</reference>
<organism>
    <name type="scientific">Alteromonas mediterranea (strain DSM 17117 / CIP 110805 / LMG 28347 / Deep ecotype)</name>
    <dbReference type="NCBI Taxonomy" id="1774373"/>
    <lineage>
        <taxon>Bacteria</taxon>
        <taxon>Pseudomonadati</taxon>
        <taxon>Pseudomonadota</taxon>
        <taxon>Gammaproteobacteria</taxon>
        <taxon>Alteromonadales</taxon>
        <taxon>Alteromonadaceae</taxon>
        <taxon>Alteromonas/Salinimonas group</taxon>
        <taxon>Alteromonas</taxon>
    </lineage>
</organism>
<keyword id="KW-0131">Cell cycle</keyword>
<keyword id="KW-0132">Cell division</keyword>
<keyword id="KW-0997">Cell inner membrane</keyword>
<keyword id="KW-1003">Cell membrane</keyword>
<keyword id="KW-0133">Cell shape</keyword>
<keyword id="KW-0961">Cell wall biogenesis/degradation</keyword>
<keyword id="KW-0328">Glycosyltransferase</keyword>
<keyword id="KW-0472">Membrane</keyword>
<keyword id="KW-0573">Peptidoglycan synthesis</keyword>
<keyword id="KW-0808">Transferase</keyword>
<gene>
    <name evidence="1" type="primary">murG</name>
    <name type="ordered locus">MADE_1015150</name>
</gene>
<evidence type="ECO:0000255" key="1">
    <source>
        <dbReference type="HAMAP-Rule" id="MF_00033"/>
    </source>
</evidence>
<feature type="chain" id="PRO_1000090403" description="UDP-N-acetylglucosamine--N-acetylmuramyl-(pentapeptide) pyrophosphoryl-undecaprenol N-acetylglucosamine transferase">
    <location>
        <begin position="1"/>
        <end position="364"/>
    </location>
</feature>
<feature type="binding site" evidence="1">
    <location>
        <begin position="12"/>
        <end position="14"/>
    </location>
    <ligand>
        <name>UDP-N-acetyl-alpha-D-glucosamine</name>
        <dbReference type="ChEBI" id="CHEBI:57705"/>
    </ligand>
</feature>
<feature type="binding site" evidence="1">
    <location>
        <position position="124"/>
    </location>
    <ligand>
        <name>UDP-N-acetyl-alpha-D-glucosamine</name>
        <dbReference type="ChEBI" id="CHEBI:57705"/>
    </ligand>
</feature>
<feature type="binding site" evidence="1">
    <location>
        <position position="167"/>
    </location>
    <ligand>
        <name>UDP-N-acetyl-alpha-D-glucosamine</name>
        <dbReference type="ChEBI" id="CHEBI:57705"/>
    </ligand>
</feature>
<feature type="binding site" evidence="1">
    <location>
        <position position="195"/>
    </location>
    <ligand>
        <name>UDP-N-acetyl-alpha-D-glucosamine</name>
        <dbReference type="ChEBI" id="CHEBI:57705"/>
    </ligand>
</feature>
<feature type="binding site" evidence="1">
    <location>
        <position position="249"/>
    </location>
    <ligand>
        <name>UDP-N-acetyl-alpha-D-glucosamine</name>
        <dbReference type="ChEBI" id="CHEBI:57705"/>
    </ligand>
</feature>
<feature type="binding site" evidence="1">
    <location>
        <begin position="268"/>
        <end position="273"/>
    </location>
    <ligand>
        <name>UDP-N-acetyl-alpha-D-glucosamine</name>
        <dbReference type="ChEBI" id="CHEBI:57705"/>
    </ligand>
</feature>
<feature type="binding site" evidence="1">
    <location>
        <position position="294"/>
    </location>
    <ligand>
        <name>UDP-N-acetyl-alpha-D-glucosamine</name>
        <dbReference type="ChEBI" id="CHEBI:57705"/>
    </ligand>
</feature>
<comment type="function">
    <text evidence="1">Cell wall formation. Catalyzes the transfer of a GlcNAc subunit on undecaprenyl-pyrophosphoryl-MurNAc-pentapeptide (lipid intermediate I) to form undecaprenyl-pyrophosphoryl-MurNAc-(pentapeptide)GlcNAc (lipid intermediate II).</text>
</comment>
<comment type="catalytic activity">
    <reaction evidence="1">
        <text>di-trans,octa-cis-undecaprenyl diphospho-N-acetyl-alpha-D-muramoyl-L-alanyl-D-glutamyl-meso-2,6-diaminopimeloyl-D-alanyl-D-alanine + UDP-N-acetyl-alpha-D-glucosamine = di-trans,octa-cis-undecaprenyl diphospho-[N-acetyl-alpha-D-glucosaminyl-(1-&gt;4)]-N-acetyl-alpha-D-muramoyl-L-alanyl-D-glutamyl-meso-2,6-diaminopimeloyl-D-alanyl-D-alanine + UDP + H(+)</text>
        <dbReference type="Rhea" id="RHEA:31227"/>
        <dbReference type="ChEBI" id="CHEBI:15378"/>
        <dbReference type="ChEBI" id="CHEBI:57705"/>
        <dbReference type="ChEBI" id="CHEBI:58223"/>
        <dbReference type="ChEBI" id="CHEBI:61387"/>
        <dbReference type="ChEBI" id="CHEBI:61388"/>
        <dbReference type="EC" id="2.4.1.227"/>
    </reaction>
</comment>
<comment type="pathway">
    <text evidence="1">Cell wall biogenesis; peptidoglycan biosynthesis.</text>
</comment>
<comment type="subcellular location">
    <subcellularLocation>
        <location evidence="1">Cell inner membrane</location>
        <topology evidence="1">Peripheral membrane protein</topology>
        <orientation evidence="1">Cytoplasmic side</orientation>
    </subcellularLocation>
</comment>
<comment type="similarity">
    <text evidence="1">Belongs to the glycosyltransferase 28 family. MurG subfamily.</text>
</comment>
<protein>
    <recommendedName>
        <fullName evidence="1">UDP-N-acetylglucosamine--N-acetylmuramyl-(pentapeptide) pyrophosphoryl-undecaprenol N-acetylglucosamine transferase</fullName>
        <ecNumber evidence="1">2.4.1.227</ecNumber>
    </recommendedName>
    <alternativeName>
        <fullName evidence="1">Undecaprenyl-PP-MurNAc-pentapeptide-UDPGlcNAc GlcNAc transferase</fullName>
    </alternativeName>
</protein>